<gene>
    <name evidence="1" type="primary">glyS</name>
    <name type="ordered locus">OEOE_0994</name>
</gene>
<reference key="1">
    <citation type="journal article" date="2006" name="Proc. Natl. Acad. Sci. U.S.A.">
        <title>Comparative genomics of the lactic acid bacteria.</title>
        <authorList>
            <person name="Makarova K.S."/>
            <person name="Slesarev A."/>
            <person name="Wolf Y.I."/>
            <person name="Sorokin A."/>
            <person name="Mirkin B."/>
            <person name="Koonin E.V."/>
            <person name="Pavlov A."/>
            <person name="Pavlova N."/>
            <person name="Karamychev V."/>
            <person name="Polouchine N."/>
            <person name="Shakhova V."/>
            <person name="Grigoriev I."/>
            <person name="Lou Y."/>
            <person name="Rohksar D."/>
            <person name="Lucas S."/>
            <person name="Huang K."/>
            <person name="Goodstein D.M."/>
            <person name="Hawkins T."/>
            <person name="Plengvidhya V."/>
            <person name="Welker D."/>
            <person name="Hughes J."/>
            <person name="Goh Y."/>
            <person name="Benson A."/>
            <person name="Baldwin K."/>
            <person name="Lee J.-H."/>
            <person name="Diaz-Muniz I."/>
            <person name="Dosti B."/>
            <person name="Smeianov V."/>
            <person name="Wechter W."/>
            <person name="Barabote R."/>
            <person name="Lorca G."/>
            <person name="Altermann E."/>
            <person name="Barrangou R."/>
            <person name="Ganesan B."/>
            <person name="Xie Y."/>
            <person name="Rawsthorne H."/>
            <person name="Tamir D."/>
            <person name="Parker C."/>
            <person name="Breidt F."/>
            <person name="Broadbent J.R."/>
            <person name="Hutkins R."/>
            <person name="O'Sullivan D."/>
            <person name="Steele J."/>
            <person name="Unlu G."/>
            <person name="Saier M.H. Jr."/>
            <person name="Klaenhammer T."/>
            <person name="Richardson P."/>
            <person name="Kozyavkin S."/>
            <person name="Weimer B.C."/>
            <person name="Mills D.A."/>
        </authorList>
    </citation>
    <scope>NUCLEOTIDE SEQUENCE [LARGE SCALE GENOMIC DNA]</scope>
    <source>
        <strain>ATCC BAA-331 / PSU-1</strain>
    </source>
</reference>
<feature type="chain" id="PRO_1000101312" description="Glycine--tRNA ligase beta subunit">
    <location>
        <begin position="1"/>
        <end position="689"/>
    </location>
</feature>
<organism>
    <name type="scientific">Oenococcus oeni (strain ATCC BAA-331 / PSU-1)</name>
    <dbReference type="NCBI Taxonomy" id="203123"/>
    <lineage>
        <taxon>Bacteria</taxon>
        <taxon>Bacillati</taxon>
        <taxon>Bacillota</taxon>
        <taxon>Bacilli</taxon>
        <taxon>Lactobacillales</taxon>
        <taxon>Lactobacillaceae</taxon>
        <taxon>Oenococcus</taxon>
    </lineage>
</organism>
<keyword id="KW-0030">Aminoacyl-tRNA synthetase</keyword>
<keyword id="KW-0067">ATP-binding</keyword>
<keyword id="KW-0963">Cytoplasm</keyword>
<keyword id="KW-0436">Ligase</keyword>
<keyword id="KW-0547">Nucleotide-binding</keyword>
<keyword id="KW-0648">Protein biosynthesis</keyword>
<keyword id="KW-1185">Reference proteome</keyword>
<accession>Q04F69</accession>
<name>SYGB_OENOB</name>
<sequence>MADYLLEIGLEEIPAHLVTESENQLIERIKNFFSDNLLDYKKIQTFSTPRRLAVLVHDLSNYSQSKDEELRGPSLKVAKDESGNWSRAAEGFARSQGTSPAEFDERDGYVYLNKHIEGVSAEEILKKIGIEVVEKMKFSTYMKWADFKLEYVRPIRWLVSLLDSKIVPFQILDVKADRFTRGHRFLSGGKISISEAGDYEETLNNAYVIVDAKVRKNSIRNQIRKIADTNDWNLHVDPDLLEEVNNIVEYPTAFAGVFDDKYLNLPEIVLTTSMRDNQRFFYVTNKQGKILPHFISVRNGDSNQIENVVKGNEKVLVARLEDAEFFFEEDQKHNIDFFMKKAERLVFHEKIGTMTEHMKRVEKIAALLANQLAFNDQEKKDLKRAANICKFDLTTAMVGEFAELQGTMAGIYAKIFGENQTVCQALSEQYLPTSSEGDLPKSKVGAMLALADKLDTLFSFFAAGIIPSGSNDPYGLRRAALGIVRIIGQQKWNFSVSKLLHSLKTAVDKHEDGFLIDFADTKEISRKVIEFFLDRIRQQSSDIRYDLLDASTGKVNEGIINYIFKRVRILASHVADPDFRDVIEALTRVQNLAEKNKSNVEIDPELFVTNSEKRLYQLTKDKDPIVLLSKGDHTVYQFLASLKEPINNYFDENMIMDKNPIIKNNRVAQINLLNNLISSLGDLRKVVVK</sequence>
<evidence type="ECO:0000255" key="1">
    <source>
        <dbReference type="HAMAP-Rule" id="MF_00255"/>
    </source>
</evidence>
<dbReference type="EC" id="6.1.1.14" evidence="1"/>
<dbReference type="EMBL" id="CP000411">
    <property type="protein sequence ID" value="ABJ56903.1"/>
    <property type="molecule type" value="Genomic_DNA"/>
</dbReference>
<dbReference type="RefSeq" id="WP_011677599.1">
    <property type="nucleotide sequence ID" value="NC_008528.1"/>
</dbReference>
<dbReference type="SMR" id="Q04F69"/>
<dbReference type="STRING" id="203123.OEOE_0994"/>
<dbReference type="DNASU" id="4415701"/>
<dbReference type="KEGG" id="ooe:OEOE_0994"/>
<dbReference type="PATRIC" id="fig|203123.7.peg.1007"/>
<dbReference type="eggNOG" id="COG0751">
    <property type="taxonomic scope" value="Bacteria"/>
</dbReference>
<dbReference type="HOGENOM" id="CLU_007220_2_2_9"/>
<dbReference type="Proteomes" id="UP000000774">
    <property type="component" value="Chromosome"/>
</dbReference>
<dbReference type="GO" id="GO:0005829">
    <property type="term" value="C:cytosol"/>
    <property type="evidence" value="ECO:0007669"/>
    <property type="project" value="TreeGrafter"/>
</dbReference>
<dbReference type="GO" id="GO:0004814">
    <property type="term" value="F:arginine-tRNA ligase activity"/>
    <property type="evidence" value="ECO:0007669"/>
    <property type="project" value="InterPro"/>
</dbReference>
<dbReference type="GO" id="GO:0005524">
    <property type="term" value="F:ATP binding"/>
    <property type="evidence" value="ECO:0007669"/>
    <property type="project" value="UniProtKB-UniRule"/>
</dbReference>
<dbReference type="GO" id="GO:0004820">
    <property type="term" value="F:glycine-tRNA ligase activity"/>
    <property type="evidence" value="ECO:0007669"/>
    <property type="project" value="UniProtKB-UniRule"/>
</dbReference>
<dbReference type="GO" id="GO:0006420">
    <property type="term" value="P:arginyl-tRNA aminoacylation"/>
    <property type="evidence" value="ECO:0007669"/>
    <property type="project" value="InterPro"/>
</dbReference>
<dbReference type="GO" id="GO:0006426">
    <property type="term" value="P:glycyl-tRNA aminoacylation"/>
    <property type="evidence" value="ECO:0007669"/>
    <property type="project" value="UniProtKB-UniRule"/>
</dbReference>
<dbReference type="HAMAP" id="MF_00255">
    <property type="entry name" value="Gly_tRNA_synth_beta"/>
    <property type="match status" value="1"/>
</dbReference>
<dbReference type="InterPro" id="IPR008909">
    <property type="entry name" value="DALR_anticod-bd"/>
</dbReference>
<dbReference type="InterPro" id="IPR015944">
    <property type="entry name" value="Gly-tRNA-synth_bsu"/>
</dbReference>
<dbReference type="InterPro" id="IPR006194">
    <property type="entry name" value="Gly-tRNA-synth_heterodimer"/>
</dbReference>
<dbReference type="NCBIfam" id="TIGR00211">
    <property type="entry name" value="glyS"/>
    <property type="match status" value="1"/>
</dbReference>
<dbReference type="PANTHER" id="PTHR30075:SF2">
    <property type="entry name" value="GLYCINE--TRNA LIGASE, CHLOROPLASTIC_MITOCHONDRIAL 2"/>
    <property type="match status" value="1"/>
</dbReference>
<dbReference type="PANTHER" id="PTHR30075">
    <property type="entry name" value="GLYCYL-TRNA SYNTHETASE"/>
    <property type="match status" value="1"/>
</dbReference>
<dbReference type="Pfam" id="PF05746">
    <property type="entry name" value="DALR_1"/>
    <property type="match status" value="1"/>
</dbReference>
<dbReference type="Pfam" id="PF02092">
    <property type="entry name" value="tRNA_synt_2f"/>
    <property type="match status" value="1"/>
</dbReference>
<dbReference type="PRINTS" id="PR01045">
    <property type="entry name" value="TRNASYNTHGB"/>
</dbReference>
<dbReference type="SUPFAM" id="SSF109604">
    <property type="entry name" value="HD-domain/PDEase-like"/>
    <property type="match status" value="1"/>
</dbReference>
<dbReference type="PROSITE" id="PS50861">
    <property type="entry name" value="AA_TRNA_LIGASE_II_GLYAB"/>
    <property type="match status" value="1"/>
</dbReference>
<proteinExistence type="inferred from homology"/>
<comment type="catalytic activity">
    <reaction evidence="1">
        <text>tRNA(Gly) + glycine + ATP = glycyl-tRNA(Gly) + AMP + diphosphate</text>
        <dbReference type="Rhea" id="RHEA:16013"/>
        <dbReference type="Rhea" id="RHEA-COMP:9664"/>
        <dbReference type="Rhea" id="RHEA-COMP:9683"/>
        <dbReference type="ChEBI" id="CHEBI:30616"/>
        <dbReference type="ChEBI" id="CHEBI:33019"/>
        <dbReference type="ChEBI" id="CHEBI:57305"/>
        <dbReference type="ChEBI" id="CHEBI:78442"/>
        <dbReference type="ChEBI" id="CHEBI:78522"/>
        <dbReference type="ChEBI" id="CHEBI:456215"/>
        <dbReference type="EC" id="6.1.1.14"/>
    </reaction>
</comment>
<comment type="subunit">
    <text evidence="1">Tetramer of two alpha and two beta subunits.</text>
</comment>
<comment type="subcellular location">
    <subcellularLocation>
        <location evidence="1">Cytoplasm</location>
    </subcellularLocation>
</comment>
<comment type="similarity">
    <text evidence="1">Belongs to the class-II aminoacyl-tRNA synthetase family.</text>
</comment>
<protein>
    <recommendedName>
        <fullName evidence="1">Glycine--tRNA ligase beta subunit</fullName>
        <ecNumber evidence="1">6.1.1.14</ecNumber>
    </recommendedName>
    <alternativeName>
        <fullName evidence="1">Glycyl-tRNA synthetase beta subunit</fullName>
        <shortName evidence="1">GlyRS</shortName>
    </alternativeName>
</protein>